<protein>
    <recommendedName>
        <fullName>Ubiquinol-cytochrome c reductase complex assembly factor 4</fullName>
    </recommendedName>
    <alternativeName>
        <fullName>Protein CCSMST1</fullName>
    </alternativeName>
</protein>
<name>UQCC4_PONAB</name>
<comment type="function">
    <text evidence="1">Required for the assembly and stability of the mitochondrial ubiquinol-cytochrome c reductase complex (complex III (CIII) or cytochrome b-c1 complex), a multisubunit transmembrane complex that is part of the mitochondrial electron transport chain (ETC) which drives oxidative phosphorylation.</text>
</comment>
<comment type="subunit">
    <text evidence="1">Forms a complex, named COMB/coordinator of mitochondrial CYTB biogenesis, composed of UQCC1, UQCC2, UQCC4, UQCC5 and UQCC6; stabilizes nascent cytochrome b/MT-CYB and promotes its membrane insertion. Forms a complex, named COMA, composed of UQCC1, UQCC2 and UQCC4; activates MT-CYB translation. Forms a complex, named COMC, composed of UQCC1, UQCC2; UQCC3 and UQCC4; mediates MT-CYB hemylation and association with the first nuclear-encoded complex III subunit UQCRQ. Complexes COMA and COMB are bound to the mitochondrion inner membrane by UQCC4.</text>
</comment>
<comment type="subcellular location">
    <subcellularLocation>
        <location evidence="1">Mitochondrion inner membrane</location>
        <topology evidence="4">Single-pass type I membrane protein</topology>
    </subcellularLocation>
</comment>
<comment type="similarity">
    <text evidence="4">Belongs to the UQCC4 family.</text>
</comment>
<evidence type="ECO:0000250" key="1">
    <source>
        <dbReference type="UniProtKB" id="Q6RUT7"/>
    </source>
</evidence>
<evidence type="ECO:0000255" key="2"/>
<evidence type="ECO:0000256" key="3">
    <source>
        <dbReference type="SAM" id="MobiDB-lite"/>
    </source>
</evidence>
<evidence type="ECO:0000305" key="4"/>
<accession>Q5RFR4</accession>
<organism>
    <name type="scientific">Pongo abelii</name>
    <name type="common">Sumatran orangutan</name>
    <name type="synonym">Pongo pygmaeus abelii</name>
    <dbReference type="NCBI Taxonomy" id="9601"/>
    <lineage>
        <taxon>Eukaryota</taxon>
        <taxon>Metazoa</taxon>
        <taxon>Chordata</taxon>
        <taxon>Craniata</taxon>
        <taxon>Vertebrata</taxon>
        <taxon>Euteleostomi</taxon>
        <taxon>Mammalia</taxon>
        <taxon>Eutheria</taxon>
        <taxon>Euarchontoglires</taxon>
        <taxon>Primates</taxon>
        <taxon>Haplorrhini</taxon>
        <taxon>Catarrhini</taxon>
        <taxon>Hominidae</taxon>
        <taxon>Pongo</taxon>
    </lineage>
</organism>
<dbReference type="EMBL" id="CR857088">
    <property type="protein sequence ID" value="CAH89393.1"/>
    <property type="molecule type" value="mRNA"/>
</dbReference>
<dbReference type="FunCoup" id="Q5RFR4">
    <property type="interactions" value="461"/>
</dbReference>
<dbReference type="STRING" id="9601.ENSPPYP00000007870"/>
<dbReference type="Ensembl" id="ENSPPYT00000008197.3">
    <property type="protein sequence ID" value="ENSPPYP00000007870.2"/>
    <property type="gene ID" value="ENSPPYG00000006951.3"/>
</dbReference>
<dbReference type="GeneID" id="100457878"/>
<dbReference type="KEGG" id="pon:100457878"/>
<dbReference type="eggNOG" id="ENOG502S8XX">
    <property type="taxonomic scope" value="Eukaryota"/>
</dbReference>
<dbReference type="GeneTree" id="ENSGT00510000049652"/>
<dbReference type="HOGENOM" id="CLU_142479_1_0_1"/>
<dbReference type="InParanoid" id="Q5RFR4"/>
<dbReference type="OMA" id="GHQRPWW"/>
<dbReference type="OrthoDB" id="5783753at2759"/>
<dbReference type="TreeFam" id="TF343850"/>
<dbReference type="Proteomes" id="UP000001595">
    <property type="component" value="Chromosome 16"/>
</dbReference>
<dbReference type="GO" id="GO:0005743">
    <property type="term" value="C:mitochondrial inner membrane"/>
    <property type="evidence" value="ECO:0000250"/>
    <property type="project" value="UniProtKB"/>
</dbReference>
<dbReference type="GO" id="GO:0034551">
    <property type="term" value="P:mitochondrial respiratory chain complex III assembly"/>
    <property type="evidence" value="ECO:0000250"/>
    <property type="project" value="UniProtKB"/>
</dbReference>
<dbReference type="InterPro" id="IPR029160">
    <property type="entry name" value="UQCC4"/>
</dbReference>
<dbReference type="InterPro" id="IPR023248">
    <property type="entry name" value="UQCC4_vert"/>
</dbReference>
<dbReference type="PANTHER" id="PTHR35268">
    <property type="entry name" value="PROTEIN CCSMST1"/>
    <property type="match status" value="1"/>
</dbReference>
<dbReference type="PANTHER" id="PTHR35268:SF1">
    <property type="entry name" value="UBIQUINOL-CYTOCHROME-C REDUCTASE COMPLEX ASSEMBLY FACTOR 4"/>
    <property type="match status" value="1"/>
</dbReference>
<dbReference type="Pfam" id="PF15013">
    <property type="entry name" value="CCSMST1"/>
    <property type="match status" value="1"/>
</dbReference>
<dbReference type="PRINTS" id="PR02042">
    <property type="entry name" value="CCSMST1"/>
</dbReference>
<sequence>MNRVLCAPAAGAVRALRLIGRTSRSLHPLPGSRDRAHPAAEEQDDPDRPTEFSSSKANPRRWSVGHSMGKGHQRPWWKVLPLSCFLVALIIWCYLREESEADQWLRQVWGEVPEPSDRSEEPETPAAYRART</sequence>
<reference key="1">
    <citation type="submission" date="2004-11" db="EMBL/GenBank/DDBJ databases">
        <authorList>
            <consortium name="The German cDNA consortium"/>
        </authorList>
    </citation>
    <scope>NUCLEOTIDE SEQUENCE [LARGE SCALE MRNA]</scope>
    <source>
        <tissue>Heart</tissue>
    </source>
</reference>
<gene>
    <name type="primary">UQCC4</name>
    <name type="synonym">CCSMST1</name>
</gene>
<feature type="signal peptide" evidence="2">
    <location>
        <begin position="1"/>
        <end position="15"/>
    </location>
</feature>
<feature type="chain" id="PRO_0000348604" description="Ubiquinol-cytochrome c reductase complex assembly factor 4">
    <location>
        <begin position="16"/>
        <end position="132"/>
    </location>
</feature>
<feature type="topological domain" description="Mitochondrial matrix" evidence="1">
    <location>
        <begin position="16"/>
        <end position="78"/>
    </location>
</feature>
<feature type="transmembrane region" description="Helical" evidence="2">
    <location>
        <begin position="79"/>
        <end position="95"/>
    </location>
</feature>
<feature type="topological domain" description="Mitochondrial intermembrane" evidence="1">
    <location>
        <begin position="96"/>
        <end position="132"/>
    </location>
</feature>
<feature type="region of interest" description="Disordered" evidence="3">
    <location>
        <begin position="24"/>
        <end position="73"/>
    </location>
</feature>
<feature type="region of interest" description="Disordered" evidence="3">
    <location>
        <begin position="110"/>
        <end position="132"/>
    </location>
</feature>
<feature type="compositionally biased region" description="Basic and acidic residues" evidence="3">
    <location>
        <begin position="32"/>
        <end position="50"/>
    </location>
</feature>
<proteinExistence type="evidence at transcript level"/>
<keyword id="KW-0249">Electron transport</keyword>
<keyword id="KW-0472">Membrane</keyword>
<keyword id="KW-0496">Mitochondrion</keyword>
<keyword id="KW-0999">Mitochondrion inner membrane</keyword>
<keyword id="KW-1185">Reference proteome</keyword>
<keyword id="KW-0679">Respiratory chain</keyword>
<keyword id="KW-0732">Signal</keyword>
<keyword id="KW-0812">Transmembrane</keyword>
<keyword id="KW-1133">Transmembrane helix</keyword>
<keyword id="KW-0813">Transport</keyword>